<feature type="chain" id="PRO_0000278175" description="N-arachidonyl glycine receptor">
    <location>
        <begin position="1"/>
        <end position="331"/>
    </location>
</feature>
<feature type="topological domain" description="Extracellular" evidence="3">
    <location>
        <begin position="1"/>
        <end position="26"/>
    </location>
</feature>
<feature type="transmembrane region" description="Helical; Name=1" evidence="3">
    <location>
        <begin position="27"/>
        <end position="47"/>
    </location>
</feature>
<feature type="topological domain" description="Cytoplasmic" evidence="3">
    <location>
        <begin position="48"/>
        <end position="56"/>
    </location>
</feature>
<feature type="transmembrane region" description="Helical; Name=2" evidence="3">
    <location>
        <begin position="57"/>
        <end position="77"/>
    </location>
</feature>
<feature type="topological domain" description="Extracellular" evidence="3">
    <location>
        <begin position="78"/>
        <end position="95"/>
    </location>
</feature>
<feature type="transmembrane region" description="Helical; Name=3" evidence="3">
    <location>
        <begin position="96"/>
        <end position="116"/>
    </location>
</feature>
<feature type="topological domain" description="Cytoplasmic" evidence="3">
    <location>
        <begin position="117"/>
        <end position="138"/>
    </location>
</feature>
<feature type="transmembrane region" description="Helical; Name=4" evidence="3">
    <location>
        <begin position="139"/>
        <end position="159"/>
    </location>
</feature>
<feature type="topological domain" description="Extracellular" evidence="3">
    <location>
        <begin position="160"/>
        <end position="191"/>
    </location>
</feature>
<feature type="transmembrane region" description="Helical; Name=5" evidence="3">
    <location>
        <begin position="192"/>
        <end position="212"/>
    </location>
</feature>
<feature type="topological domain" description="Cytoplasmic" evidence="3">
    <location>
        <begin position="213"/>
        <end position="236"/>
    </location>
</feature>
<feature type="transmembrane region" description="Helical; Name=6" evidence="3">
    <location>
        <begin position="237"/>
        <end position="257"/>
    </location>
</feature>
<feature type="topological domain" description="Extracellular" evidence="3">
    <location>
        <begin position="258"/>
        <end position="268"/>
    </location>
</feature>
<feature type="transmembrane region" description="Helical; Name=7" evidence="3">
    <location>
        <begin position="269"/>
        <end position="289"/>
    </location>
</feature>
<feature type="topological domain" description="Cytoplasmic" evidence="3">
    <location>
        <begin position="290"/>
        <end position="331"/>
    </location>
</feature>
<feature type="modified residue" description="Phosphoserine" evidence="2">
    <location>
        <position position="322"/>
    </location>
</feature>
<feature type="glycosylation site" description="N-linked (GlcNAc...) asparagine" evidence="3">
    <location>
        <position position="14"/>
    </location>
</feature>
<feature type="glycosylation site" description="N-linked (GlcNAc...) asparagine" evidence="3">
    <location>
        <position position="188"/>
    </location>
</feature>
<feature type="disulfide bond" evidence="4">
    <location>
        <begin position="94"/>
        <end position="172"/>
    </location>
</feature>
<dbReference type="EMBL" id="BC128782">
    <property type="protein sequence ID" value="AAI28783.1"/>
    <property type="molecule type" value="mRNA"/>
</dbReference>
<dbReference type="RefSeq" id="NP_001073178.1">
    <property type="nucleotide sequence ID" value="NM_001079710.1"/>
</dbReference>
<dbReference type="SMR" id="A1A5S3"/>
<dbReference type="FunCoup" id="A1A5S3">
    <property type="interactions" value="126"/>
</dbReference>
<dbReference type="STRING" id="10116.ENSRNOP00000016848"/>
<dbReference type="GlyCosmos" id="A1A5S3">
    <property type="glycosylation" value="2 sites, No reported glycans"/>
</dbReference>
<dbReference type="GlyGen" id="A1A5S3">
    <property type="glycosylation" value="2 sites"/>
</dbReference>
<dbReference type="iPTMnet" id="A1A5S3"/>
<dbReference type="PhosphoSitePlus" id="A1A5S3"/>
<dbReference type="PaxDb" id="10116-ENSRNOP00000016848"/>
<dbReference type="Ensembl" id="ENSRNOT00000016848.5">
    <property type="protein sequence ID" value="ENSRNOP00000016848.2"/>
    <property type="gene ID" value="ENSRNOG00000012628.5"/>
</dbReference>
<dbReference type="GeneID" id="679957"/>
<dbReference type="KEGG" id="rno:679957"/>
<dbReference type="AGR" id="RGD:1304889"/>
<dbReference type="CTD" id="2841"/>
<dbReference type="RGD" id="1304889">
    <property type="gene designation" value="Gpr18"/>
</dbReference>
<dbReference type="eggNOG" id="ENOG502QT1V">
    <property type="taxonomic scope" value="Eukaryota"/>
</dbReference>
<dbReference type="GeneTree" id="ENSGT01130000278275"/>
<dbReference type="HOGENOM" id="CLU_009579_8_2_1"/>
<dbReference type="InParanoid" id="A1A5S3"/>
<dbReference type="OMA" id="TITIYMM"/>
<dbReference type="OrthoDB" id="5952950at2759"/>
<dbReference type="PhylomeDB" id="A1A5S3"/>
<dbReference type="TreeFam" id="TF330775"/>
<dbReference type="Reactome" id="R-RNO-373076">
    <property type="pathway name" value="Class A/1 (Rhodopsin-like receptors)"/>
</dbReference>
<dbReference type="Reactome" id="R-RNO-418594">
    <property type="pathway name" value="G alpha (i) signalling events"/>
</dbReference>
<dbReference type="PRO" id="PR:A1A5S3"/>
<dbReference type="Proteomes" id="UP000002494">
    <property type="component" value="Chromosome 15"/>
</dbReference>
<dbReference type="Bgee" id="ENSRNOG00000012628">
    <property type="expression patterns" value="Expressed in spleen and 11 other cell types or tissues"/>
</dbReference>
<dbReference type="GO" id="GO:0030659">
    <property type="term" value="C:cytoplasmic vesicle membrane"/>
    <property type="evidence" value="ECO:0007669"/>
    <property type="project" value="UniProtKB-SubCell"/>
</dbReference>
<dbReference type="GO" id="GO:0005886">
    <property type="term" value="C:plasma membrane"/>
    <property type="evidence" value="ECO:0000318"/>
    <property type="project" value="GO_Central"/>
</dbReference>
<dbReference type="GO" id="GO:0004930">
    <property type="term" value="F:G protein-coupled receptor activity"/>
    <property type="evidence" value="ECO:0000266"/>
    <property type="project" value="RGD"/>
</dbReference>
<dbReference type="GO" id="GO:0002300">
    <property type="term" value="P:CD8-positive, alpha-beta intraepithelial T cell differentiation"/>
    <property type="evidence" value="ECO:0000266"/>
    <property type="project" value="RGD"/>
</dbReference>
<dbReference type="GO" id="GO:0002305">
    <property type="term" value="P:CD8-positive, gamma-delta intraepithelial T cell differentiation"/>
    <property type="evidence" value="ECO:0000266"/>
    <property type="project" value="RGD"/>
</dbReference>
<dbReference type="GO" id="GO:0007186">
    <property type="term" value="P:G protein-coupled receptor signaling pathway"/>
    <property type="evidence" value="ECO:0000318"/>
    <property type="project" value="GO_Central"/>
</dbReference>
<dbReference type="GO" id="GO:0002689">
    <property type="term" value="P:negative regulation of leukocyte chemotaxis"/>
    <property type="evidence" value="ECO:0000266"/>
    <property type="project" value="RGD"/>
</dbReference>
<dbReference type="GO" id="GO:0032720">
    <property type="term" value="P:negative regulation of tumor necrosis factor production"/>
    <property type="evidence" value="ECO:0000266"/>
    <property type="project" value="RGD"/>
</dbReference>
<dbReference type="CDD" id="cd15166">
    <property type="entry name" value="7tmA_NAGly_R_GPR18"/>
    <property type="match status" value="1"/>
</dbReference>
<dbReference type="FunFam" id="1.20.1070.10:FF:000176">
    <property type="entry name" value="N-arachidonyl glycine receptor"/>
    <property type="match status" value="1"/>
</dbReference>
<dbReference type="Gene3D" id="1.20.1070.10">
    <property type="entry name" value="Rhodopsin 7-helix transmembrane proteins"/>
    <property type="match status" value="1"/>
</dbReference>
<dbReference type="InterPro" id="IPR000276">
    <property type="entry name" value="GPCR_Rhodpsn"/>
</dbReference>
<dbReference type="InterPro" id="IPR017452">
    <property type="entry name" value="GPCR_Rhodpsn_7TM"/>
</dbReference>
<dbReference type="InterPro" id="IPR028335">
    <property type="entry name" value="GPR18"/>
</dbReference>
<dbReference type="PANTHER" id="PTHR24232">
    <property type="entry name" value="G-PROTEIN COUPLED RECEPTOR"/>
    <property type="match status" value="1"/>
</dbReference>
<dbReference type="PANTHER" id="PTHR24232:SF1">
    <property type="entry name" value="N-ARACHIDONYL GLYCINE RECEPTOR"/>
    <property type="match status" value="1"/>
</dbReference>
<dbReference type="Pfam" id="PF00001">
    <property type="entry name" value="7tm_1"/>
    <property type="match status" value="1"/>
</dbReference>
<dbReference type="PRINTS" id="PR00237">
    <property type="entry name" value="GPCRRHODOPSN"/>
</dbReference>
<dbReference type="PRINTS" id="PR01157">
    <property type="entry name" value="P2YPURNOCPTR"/>
</dbReference>
<dbReference type="SUPFAM" id="SSF81321">
    <property type="entry name" value="Family A G protein-coupled receptor-like"/>
    <property type="match status" value="1"/>
</dbReference>
<dbReference type="PROSITE" id="PS00237">
    <property type="entry name" value="G_PROTEIN_RECEP_F1_1"/>
    <property type="match status" value="1"/>
</dbReference>
<dbReference type="PROSITE" id="PS50262">
    <property type="entry name" value="G_PROTEIN_RECEP_F1_2"/>
    <property type="match status" value="1"/>
</dbReference>
<sequence length="331" mass="37556">MAIPSNRDQLALSNGSHPEEYKIAALVFYSCIFLIGLLVNVTALWVFSCTTKKRTTVTIYMMNVALLDLVFILSLPFRMFYYAKGEWPFGDYFCHILGALVVFYPSLALWLLALISADRYMAIVQPKYAKELKNTGKAVLACVGVWIMTLTTTVPLLLLDEDPDKASSPATCLKISDIIHLKAVNVLNFTRLIFFFLIPLFIMIGCYVVIIHSLLRGQTSKLKPKVKEKSIRIIVTLLLQVLACFVPFHICFALLMLQGEENSYSPWGAFTTFLMNLSTCLDVVLYYIVSKQFQARVISVMLYRNYLRSVRRKSVRSGSLRSLSNMNSEML</sequence>
<comment type="function">
    <text evidence="1 2">G protein-coupled receptor (GPCR) that plays a role in diverse physiological processes particularly within the immune and nervous systems. Becomes active when triggered by various endogenous ligands including endocannabinoid N-arachidonyl glycine (NAGly), delta-9-tetrahydrocannabinol or resolvin D2/RvD2 derived from the omega-3 fatty acid docosahexaenoic acid (DHA). Upon RvD2 binding, facilitates the resolution of inflammation, aiding in tissue repair and homeostasis. Mechanistically, RvD2 ligation initiates Galphas protein coupling, activation of cAMP-PKA signaling pathway and phosphorylation of STAT3, leading to RvD2-stimulated macrophage phagocytosis. Mediates NAGly-induced process of reorganization of actin filaments and induction of acrosomal exocytosis (By similarity). Activation by N-arachidonoyl glycine (NAGly) can also induce apoptosis in macrophages (By similarity). Plays a role in homeostasis of CD8+ subsets of intraepithelial lymphocytes (IELs) (CD8alphaalpha and CD8alphabeta IELs) in small intestine by supporting preferential migration of CD8alphaalpha T-cells to intraepithelial compartment over lamina propria compartment, and by mediating their reconstitution into small intestine after bone marrow transplant (By similarity). Participates also in hypotensive responses, mediating reduction in intraocular and blood pressure (By similarity).</text>
</comment>
<comment type="subcellular location">
    <subcellularLocation>
        <location evidence="1">Cell membrane</location>
        <topology evidence="3">Multi-pass membrane protein</topology>
    </subcellularLocation>
    <subcellularLocation>
        <location evidence="1">Cytoplasmic vesicle membrane</location>
    </subcellularLocation>
</comment>
<comment type="tissue specificity">
    <text evidence="5">Expressed in testis, spleen and brain (at protein level).</text>
</comment>
<comment type="similarity">
    <text evidence="4">Belongs to the G-protein coupled receptor 1 family.</text>
</comment>
<accession>A1A5S3</accession>
<name>GPR18_RAT</name>
<keyword id="KW-1003">Cell membrane</keyword>
<keyword id="KW-0968">Cytoplasmic vesicle</keyword>
<keyword id="KW-1015">Disulfide bond</keyword>
<keyword id="KW-0297">G-protein coupled receptor</keyword>
<keyword id="KW-0325">Glycoprotein</keyword>
<keyword id="KW-0472">Membrane</keyword>
<keyword id="KW-0597">Phosphoprotein</keyword>
<keyword id="KW-0675">Receptor</keyword>
<keyword id="KW-1185">Reference proteome</keyword>
<keyword id="KW-0807">Transducer</keyword>
<keyword id="KW-0812">Transmembrane</keyword>
<keyword id="KW-1133">Transmembrane helix</keyword>
<reference evidence="6" key="1">
    <citation type="journal article" date="2004" name="Genome Res.">
        <title>The status, quality, and expansion of the NIH full-length cDNA project: the Mammalian Gene Collection (MGC).</title>
        <authorList>
            <consortium name="The MGC Project Team"/>
        </authorList>
    </citation>
    <scope>NUCLEOTIDE SEQUENCE [LARGE SCALE MRNA]</scope>
    <source>
        <tissue evidence="6">Spleen</tissue>
    </source>
</reference>
<reference key="2">
    <citation type="journal article" date="2014" name="J. Pharmacol. Exp. Ther.">
        <title>The novel endocannabinoid receptor GPR18 is expressed in the rostral ventrolateral medulla and exerts tonic restraining influence on blood pressure.</title>
        <authorList>
            <person name="Penumarti A."/>
            <person name="Abdel-Rahman A.A."/>
        </authorList>
    </citation>
    <scope>FUNCTION</scope>
    <scope>TISSUE SPECIFICITY</scope>
</reference>
<protein>
    <recommendedName>
        <fullName>N-arachidonyl glycine receptor</fullName>
        <shortName>NAGly receptor</shortName>
    </recommendedName>
    <alternativeName>
        <fullName>G-protein coupled receptor 18</fullName>
    </alternativeName>
</protein>
<proteinExistence type="evidence at protein level"/>
<evidence type="ECO:0000250" key="1">
    <source>
        <dbReference type="UniProtKB" id="Q14330"/>
    </source>
</evidence>
<evidence type="ECO:0000250" key="2">
    <source>
        <dbReference type="UniProtKB" id="Q8K1Z6"/>
    </source>
</evidence>
<evidence type="ECO:0000255" key="3"/>
<evidence type="ECO:0000255" key="4">
    <source>
        <dbReference type="PROSITE-ProRule" id="PRU00521"/>
    </source>
</evidence>
<evidence type="ECO:0000269" key="5">
    <source>
    </source>
</evidence>
<evidence type="ECO:0000312" key="6">
    <source>
        <dbReference type="EMBL" id="AAI28783.1"/>
    </source>
</evidence>
<organism>
    <name type="scientific">Rattus norvegicus</name>
    <name type="common">Rat</name>
    <dbReference type="NCBI Taxonomy" id="10116"/>
    <lineage>
        <taxon>Eukaryota</taxon>
        <taxon>Metazoa</taxon>
        <taxon>Chordata</taxon>
        <taxon>Craniata</taxon>
        <taxon>Vertebrata</taxon>
        <taxon>Euteleostomi</taxon>
        <taxon>Mammalia</taxon>
        <taxon>Eutheria</taxon>
        <taxon>Euarchontoglires</taxon>
        <taxon>Glires</taxon>
        <taxon>Rodentia</taxon>
        <taxon>Myomorpha</taxon>
        <taxon>Muroidea</taxon>
        <taxon>Muridae</taxon>
        <taxon>Murinae</taxon>
        <taxon>Rattus</taxon>
    </lineage>
</organism>
<gene>
    <name evidence="6" type="primary">Gpr18</name>
</gene>